<comment type="function">
    <text evidence="1">Catalyzes the reversible isomerization-deamination of glucosamine 6-phosphate (GlcN6P) to form fructose 6-phosphate (Fru6P) and ammonium ion.</text>
</comment>
<comment type="catalytic activity">
    <reaction evidence="1">
        <text>alpha-D-glucosamine 6-phosphate + H2O = beta-D-fructose 6-phosphate + NH4(+)</text>
        <dbReference type="Rhea" id="RHEA:12172"/>
        <dbReference type="ChEBI" id="CHEBI:15377"/>
        <dbReference type="ChEBI" id="CHEBI:28938"/>
        <dbReference type="ChEBI" id="CHEBI:57634"/>
        <dbReference type="ChEBI" id="CHEBI:75989"/>
        <dbReference type="EC" id="3.5.99.6"/>
    </reaction>
</comment>
<comment type="activity regulation">
    <text evidence="1">Allosterically activated by N-acetylglucosamine 6-phosphate (GlcNAc6P).</text>
</comment>
<comment type="pathway">
    <text evidence="1">Amino-sugar metabolism; N-acetylneuraminate degradation; D-fructose 6-phosphate from N-acetylneuraminate: step 5/5.</text>
</comment>
<comment type="similarity">
    <text evidence="1">Belongs to the glucosamine/galactosamine-6-phosphate isomerase family. NagB subfamily.</text>
</comment>
<sequence>MRLIIQPDYQSVSQWAAHYVAAKIKAANPTPEKPFVLGCPTGSSPLGMYKALIDLNKKGIVSFQNVVTFNMDEYVGLPKEHPESYYSFMWNNFFSHIDIKPENTNILNGNAADLDAECARYEEKIKSYGGIDLFMGGIGPDGHIAFNEPGSSLSSRTRQKTLTTDTIIANSRFFDNDINKVPKTSLTVGVGTVLSAREVMIIVNGHNKARALYHAVEGAITQMWTISALQMHEKGIIVCDDAATAELKVGTYRYFKDIEADHLDPQSLLK</sequence>
<dbReference type="EC" id="3.5.99.6" evidence="1"/>
<dbReference type="EMBL" id="AP006841">
    <property type="protein sequence ID" value="BAD47734.1"/>
    <property type="molecule type" value="Genomic_DNA"/>
</dbReference>
<dbReference type="RefSeq" id="WP_005775719.1">
    <property type="nucleotide sequence ID" value="NZ_UYXF01000032.1"/>
</dbReference>
<dbReference type="RefSeq" id="YP_098268.1">
    <property type="nucleotide sequence ID" value="NC_006347.1"/>
</dbReference>
<dbReference type="SMR" id="Q64XP2"/>
<dbReference type="STRING" id="295405.BF0984"/>
<dbReference type="GeneID" id="93106565"/>
<dbReference type="KEGG" id="bfr:BF0984"/>
<dbReference type="PATRIC" id="fig|295405.11.peg.982"/>
<dbReference type="HOGENOM" id="CLU_049611_0_1_10"/>
<dbReference type="OrthoDB" id="9791139at2"/>
<dbReference type="UniPathway" id="UPA00629">
    <property type="reaction ID" value="UER00684"/>
</dbReference>
<dbReference type="Proteomes" id="UP000002197">
    <property type="component" value="Chromosome"/>
</dbReference>
<dbReference type="GO" id="GO:0005737">
    <property type="term" value="C:cytoplasm"/>
    <property type="evidence" value="ECO:0007669"/>
    <property type="project" value="TreeGrafter"/>
</dbReference>
<dbReference type="GO" id="GO:0004342">
    <property type="term" value="F:glucosamine-6-phosphate deaminase activity"/>
    <property type="evidence" value="ECO:0007669"/>
    <property type="project" value="UniProtKB-UniRule"/>
</dbReference>
<dbReference type="GO" id="GO:0042802">
    <property type="term" value="F:identical protein binding"/>
    <property type="evidence" value="ECO:0007669"/>
    <property type="project" value="TreeGrafter"/>
</dbReference>
<dbReference type="GO" id="GO:0005975">
    <property type="term" value="P:carbohydrate metabolic process"/>
    <property type="evidence" value="ECO:0007669"/>
    <property type="project" value="InterPro"/>
</dbReference>
<dbReference type="GO" id="GO:0006043">
    <property type="term" value="P:glucosamine catabolic process"/>
    <property type="evidence" value="ECO:0007669"/>
    <property type="project" value="TreeGrafter"/>
</dbReference>
<dbReference type="GO" id="GO:0006046">
    <property type="term" value="P:N-acetylglucosamine catabolic process"/>
    <property type="evidence" value="ECO:0007669"/>
    <property type="project" value="TreeGrafter"/>
</dbReference>
<dbReference type="GO" id="GO:0019262">
    <property type="term" value="P:N-acetylneuraminate catabolic process"/>
    <property type="evidence" value="ECO:0007669"/>
    <property type="project" value="UniProtKB-UniRule"/>
</dbReference>
<dbReference type="CDD" id="cd01399">
    <property type="entry name" value="GlcN6P_deaminase"/>
    <property type="match status" value="1"/>
</dbReference>
<dbReference type="FunFam" id="3.40.50.1360:FF:000002">
    <property type="entry name" value="Glucosamine-6-phosphate deaminase"/>
    <property type="match status" value="1"/>
</dbReference>
<dbReference type="Gene3D" id="3.40.50.1360">
    <property type="match status" value="1"/>
</dbReference>
<dbReference type="HAMAP" id="MF_01241">
    <property type="entry name" value="GlcN6P_deamin"/>
    <property type="match status" value="1"/>
</dbReference>
<dbReference type="InterPro" id="IPR006148">
    <property type="entry name" value="Glc/Gal-6P_isomerase"/>
</dbReference>
<dbReference type="InterPro" id="IPR004547">
    <property type="entry name" value="Glucosamine6P_isomerase"/>
</dbReference>
<dbReference type="InterPro" id="IPR018321">
    <property type="entry name" value="Glucosamine6P_isomerase_CS"/>
</dbReference>
<dbReference type="InterPro" id="IPR037171">
    <property type="entry name" value="NagB/RpiA_transferase-like"/>
</dbReference>
<dbReference type="NCBIfam" id="TIGR00502">
    <property type="entry name" value="nagB"/>
    <property type="match status" value="1"/>
</dbReference>
<dbReference type="PANTHER" id="PTHR11280">
    <property type="entry name" value="GLUCOSAMINE-6-PHOSPHATE ISOMERASE"/>
    <property type="match status" value="1"/>
</dbReference>
<dbReference type="PANTHER" id="PTHR11280:SF5">
    <property type="entry name" value="GLUCOSAMINE-6-PHOSPHATE ISOMERASE"/>
    <property type="match status" value="1"/>
</dbReference>
<dbReference type="Pfam" id="PF01182">
    <property type="entry name" value="Glucosamine_iso"/>
    <property type="match status" value="1"/>
</dbReference>
<dbReference type="SUPFAM" id="SSF100950">
    <property type="entry name" value="NagB/RpiA/CoA transferase-like"/>
    <property type="match status" value="1"/>
</dbReference>
<dbReference type="PROSITE" id="PS01161">
    <property type="entry name" value="GLC_GALNAC_ISOMERASE"/>
    <property type="match status" value="1"/>
</dbReference>
<accession>Q64XP2</accession>
<evidence type="ECO:0000255" key="1">
    <source>
        <dbReference type="HAMAP-Rule" id="MF_01241"/>
    </source>
</evidence>
<reference key="1">
    <citation type="journal article" date="2004" name="Proc. Natl. Acad. Sci. U.S.A.">
        <title>Genomic analysis of Bacteroides fragilis reveals extensive DNA inversions regulating cell surface adaptation.</title>
        <authorList>
            <person name="Kuwahara T."/>
            <person name="Yamashita A."/>
            <person name="Hirakawa H."/>
            <person name="Nakayama H."/>
            <person name="Toh H."/>
            <person name="Okada N."/>
            <person name="Kuhara S."/>
            <person name="Hattori M."/>
            <person name="Hayashi T."/>
            <person name="Ohnishi Y."/>
        </authorList>
    </citation>
    <scope>NUCLEOTIDE SEQUENCE [LARGE SCALE GENOMIC DNA]</scope>
    <source>
        <strain>YCH46</strain>
    </source>
</reference>
<gene>
    <name evidence="1" type="primary">nagB</name>
    <name type="ordered locus">BF0984</name>
</gene>
<feature type="chain" id="PRO_1000066958" description="Glucosamine-6-phosphate deaminase">
    <location>
        <begin position="1"/>
        <end position="270"/>
    </location>
</feature>
<feature type="active site" description="Proton acceptor; for enolization step" evidence="1">
    <location>
        <position position="72"/>
    </location>
</feature>
<feature type="active site" description="For ring-opening step" evidence="1">
    <location>
        <position position="141"/>
    </location>
</feature>
<feature type="active site" description="Proton acceptor; for ring-opening step" evidence="1">
    <location>
        <position position="143"/>
    </location>
</feature>
<feature type="active site" description="For ring-opening step" evidence="1">
    <location>
        <position position="148"/>
    </location>
</feature>
<feature type="site" description="Part of the allosteric site" evidence="1">
    <location>
        <position position="151"/>
    </location>
</feature>
<feature type="site" description="Part of the allosteric site" evidence="1">
    <location>
        <position position="158"/>
    </location>
</feature>
<feature type="site" description="Part of the allosteric site" evidence="1">
    <location>
        <position position="160"/>
    </location>
</feature>
<feature type="site" description="Part of the allosteric site" evidence="1">
    <location>
        <position position="161"/>
    </location>
</feature>
<feature type="site" description="Part of the allosteric site" evidence="1">
    <location>
        <position position="254"/>
    </location>
</feature>
<name>NAGB_BACFR</name>
<protein>
    <recommendedName>
        <fullName evidence="1">Glucosamine-6-phosphate deaminase</fullName>
        <ecNumber evidence="1">3.5.99.6</ecNumber>
    </recommendedName>
    <alternativeName>
        <fullName evidence="1">GlcN6P deaminase</fullName>
        <shortName evidence="1">GNPDA</shortName>
    </alternativeName>
    <alternativeName>
        <fullName evidence="1">Glucosamine-6-phosphate isomerase</fullName>
    </alternativeName>
</protein>
<keyword id="KW-0021">Allosteric enzyme</keyword>
<keyword id="KW-0119">Carbohydrate metabolism</keyword>
<keyword id="KW-0378">Hydrolase</keyword>
<organism>
    <name type="scientific">Bacteroides fragilis (strain YCH46)</name>
    <dbReference type="NCBI Taxonomy" id="295405"/>
    <lineage>
        <taxon>Bacteria</taxon>
        <taxon>Pseudomonadati</taxon>
        <taxon>Bacteroidota</taxon>
        <taxon>Bacteroidia</taxon>
        <taxon>Bacteroidales</taxon>
        <taxon>Bacteroidaceae</taxon>
        <taxon>Bacteroides</taxon>
    </lineage>
</organism>
<proteinExistence type="inferred from homology"/>